<name>TIFAB_MOUSE</name>
<accession>Q8JZM6</accession>
<accession>Q05DP7</accession>
<accession>Q571I3</accession>
<evidence type="ECO:0000250" key="1"/>
<evidence type="ECO:0000250" key="2">
    <source>
        <dbReference type="UniProtKB" id="Q6ZNK6"/>
    </source>
</evidence>
<evidence type="ECO:0000255" key="3"/>
<evidence type="ECO:0000269" key="4">
    <source>
    </source>
</evidence>
<evidence type="ECO:0000305" key="5"/>
<evidence type="ECO:0000312" key="6">
    <source>
        <dbReference type="EMBL" id="AAH05528.1"/>
    </source>
</evidence>
<evidence type="ECO:0000312" key="7">
    <source>
        <dbReference type="EMBL" id="AAH27057.1"/>
    </source>
</evidence>
<evidence type="ECO:0000312" key="8">
    <source>
        <dbReference type="EMBL" id="BAC29516.1"/>
    </source>
</evidence>
<evidence type="ECO:0000312" key="9">
    <source>
        <dbReference type="EMBL" id="BAD90131.1"/>
    </source>
</evidence>
<evidence type="ECO:0000312" key="10">
    <source>
        <dbReference type="EMBL" id="BAE32135.1"/>
    </source>
</evidence>
<evidence type="ECO:0000312" key="11">
    <source>
        <dbReference type="EMBL" id="BAE41737.1"/>
    </source>
</evidence>
<proteinExistence type="evidence at protein level"/>
<gene>
    <name evidence="2" type="primary">Tifab</name>
</gene>
<reference evidence="8" key="1">
    <citation type="journal article" date="2005" name="Science">
        <title>The transcriptional landscape of the mammalian genome.</title>
        <authorList>
            <person name="Carninci P."/>
            <person name="Kasukawa T."/>
            <person name="Katayama S."/>
            <person name="Gough J."/>
            <person name="Frith M.C."/>
            <person name="Maeda N."/>
            <person name="Oyama R."/>
            <person name="Ravasi T."/>
            <person name="Lenhard B."/>
            <person name="Wells C."/>
            <person name="Kodzius R."/>
            <person name="Shimokawa K."/>
            <person name="Bajic V.B."/>
            <person name="Brenner S.E."/>
            <person name="Batalov S."/>
            <person name="Forrest A.R."/>
            <person name="Zavolan M."/>
            <person name="Davis M.J."/>
            <person name="Wilming L.G."/>
            <person name="Aidinis V."/>
            <person name="Allen J.E."/>
            <person name="Ambesi-Impiombato A."/>
            <person name="Apweiler R."/>
            <person name="Aturaliya R.N."/>
            <person name="Bailey T.L."/>
            <person name="Bansal M."/>
            <person name="Baxter L."/>
            <person name="Beisel K.W."/>
            <person name="Bersano T."/>
            <person name="Bono H."/>
            <person name="Chalk A.M."/>
            <person name="Chiu K.P."/>
            <person name="Choudhary V."/>
            <person name="Christoffels A."/>
            <person name="Clutterbuck D.R."/>
            <person name="Crowe M.L."/>
            <person name="Dalla E."/>
            <person name="Dalrymple B.P."/>
            <person name="de Bono B."/>
            <person name="Della Gatta G."/>
            <person name="di Bernardo D."/>
            <person name="Down T."/>
            <person name="Engstrom P."/>
            <person name="Fagiolini M."/>
            <person name="Faulkner G."/>
            <person name="Fletcher C.F."/>
            <person name="Fukushima T."/>
            <person name="Furuno M."/>
            <person name="Futaki S."/>
            <person name="Gariboldi M."/>
            <person name="Georgii-Hemming P."/>
            <person name="Gingeras T.R."/>
            <person name="Gojobori T."/>
            <person name="Green R.E."/>
            <person name="Gustincich S."/>
            <person name="Harbers M."/>
            <person name="Hayashi Y."/>
            <person name="Hensch T.K."/>
            <person name="Hirokawa N."/>
            <person name="Hill D."/>
            <person name="Huminiecki L."/>
            <person name="Iacono M."/>
            <person name="Ikeo K."/>
            <person name="Iwama A."/>
            <person name="Ishikawa T."/>
            <person name="Jakt M."/>
            <person name="Kanapin A."/>
            <person name="Katoh M."/>
            <person name="Kawasawa Y."/>
            <person name="Kelso J."/>
            <person name="Kitamura H."/>
            <person name="Kitano H."/>
            <person name="Kollias G."/>
            <person name="Krishnan S.P."/>
            <person name="Kruger A."/>
            <person name="Kummerfeld S.K."/>
            <person name="Kurochkin I.V."/>
            <person name="Lareau L.F."/>
            <person name="Lazarevic D."/>
            <person name="Lipovich L."/>
            <person name="Liu J."/>
            <person name="Liuni S."/>
            <person name="McWilliam S."/>
            <person name="Madan Babu M."/>
            <person name="Madera M."/>
            <person name="Marchionni L."/>
            <person name="Matsuda H."/>
            <person name="Matsuzawa S."/>
            <person name="Miki H."/>
            <person name="Mignone F."/>
            <person name="Miyake S."/>
            <person name="Morris K."/>
            <person name="Mottagui-Tabar S."/>
            <person name="Mulder N."/>
            <person name="Nakano N."/>
            <person name="Nakauchi H."/>
            <person name="Ng P."/>
            <person name="Nilsson R."/>
            <person name="Nishiguchi S."/>
            <person name="Nishikawa S."/>
            <person name="Nori F."/>
            <person name="Ohara O."/>
            <person name="Okazaki Y."/>
            <person name="Orlando V."/>
            <person name="Pang K.C."/>
            <person name="Pavan W.J."/>
            <person name="Pavesi G."/>
            <person name="Pesole G."/>
            <person name="Petrovsky N."/>
            <person name="Piazza S."/>
            <person name="Reed J."/>
            <person name="Reid J.F."/>
            <person name="Ring B.Z."/>
            <person name="Ringwald M."/>
            <person name="Rost B."/>
            <person name="Ruan Y."/>
            <person name="Salzberg S.L."/>
            <person name="Sandelin A."/>
            <person name="Schneider C."/>
            <person name="Schoenbach C."/>
            <person name="Sekiguchi K."/>
            <person name="Semple C.A."/>
            <person name="Seno S."/>
            <person name="Sessa L."/>
            <person name="Sheng Y."/>
            <person name="Shibata Y."/>
            <person name="Shimada H."/>
            <person name="Shimada K."/>
            <person name="Silva D."/>
            <person name="Sinclair B."/>
            <person name="Sperling S."/>
            <person name="Stupka E."/>
            <person name="Sugiura K."/>
            <person name="Sultana R."/>
            <person name="Takenaka Y."/>
            <person name="Taki K."/>
            <person name="Tammoja K."/>
            <person name="Tan S.L."/>
            <person name="Tang S."/>
            <person name="Taylor M.S."/>
            <person name="Tegner J."/>
            <person name="Teichmann S.A."/>
            <person name="Ueda H.R."/>
            <person name="van Nimwegen E."/>
            <person name="Verardo R."/>
            <person name="Wei C.L."/>
            <person name="Yagi K."/>
            <person name="Yamanishi H."/>
            <person name="Zabarovsky E."/>
            <person name="Zhu S."/>
            <person name="Zimmer A."/>
            <person name="Hide W."/>
            <person name="Bult C."/>
            <person name="Grimmond S.M."/>
            <person name="Teasdale R.D."/>
            <person name="Liu E.T."/>
            <person name="Brusic V."/>
            <person name="Quackenbush J."/>
            <person name="Wahlestedt C."/>
            <person name="Mattick J.S."/>
            <person name="Hume D.A."/>
            <person name="Kai C."/>
            <person name="Sasaki D."/>
            <person name="Tomaru Y."/>
            <person name="Fukuda S."/>
            <person name="Kanamori-Katayama M."/>
            <person name="Suzuki M."/>
            <person name="Aoki J."/>
            <person name="Arakawa T."/>
            <person name="Iida J."/>
            <person name="Imamura K."/>
            <person name="Itoh M."/>
            <person name="Kato T."/>
            <person name="Kawaji H."/>
            <person name="Kawagashira N."/>
            <person name="Kawashima T."/>
            <person name="Kojima M."/>
            <person name="Kondo S."/>
            <person name="Konno H."/>
            <person name="Nakano K."/>
            <person name="Ninomiya N."/>
            <person name="Nishio T."/>
            <person name="Okada M."/>
            <person name="Plessy C."/>
            <person name="Shibata K."/>
            <person name="Shiraki T."/>
            <person name="Suzuki S."/>
            <person name="Tagami M."/>
            <person name="Waki K."/>
            <person name="Watahiki A."/>
            <person name="Okamura-Oho Y."/>
            <person name="Suzuki H."/>
            <person name="Kawai J."/>
            <person name="Hayashizaki Y."/>
        </authorList>
    </citation>
    <scope>NUCLEOTIDE SEQUENCE [LARGE SCALE MRNA]</scope>
    <source>
        <strain evidence="8">C57BL/6J</strain>
        <strain evidence="11">NOD</strain>
        <tissue evidence="8">Bone</tissue>
        <tissue evidence="11">Dendritic cell</tissue>
        <tissue evidence="10">Thymus</tissue>
    </source>
</reference>
<reference evidence="9" key="2">
    <citation type="submission" date="2005-02" db="EMBL/GenBank/DDBJ databases">
        <title>Prediction of the coding sequences of mouse homologues of KIAA gene. The complete nucleotide sequences of mouse KIAA-homologous cDNAs identified by screening of terminal sequences of cDNA clones randomly sampled from size-fractionated libraries.</title>
        <authorList>
            <person name="Okazaki N."/>
            <person name="Kikuno R.F."/>
            <person name="Ohara R."/>
            <person name="Inamoto S."/>
            <person name="Nagase T."/>
            <person name="Ohara O."/>
            <person name="Koga H."/>
        </authorList>
    </citation>
    <scope>NUCLEOTIDE SEQUENCE [LARGE SCALE MRNA]</scope>
    <source>
        <tissue evidence="9">Spleen</tissue>
    </source>
</reference>
<reference evidence="7" key="3">
    <citation type="journal article" date="2004" name="Genome Res.">
        <title>The status, quality, and expansion of the NIH full-length cDNA project: the Mammalian Gene Collection (MGC).</title>
        <authorList>
            <consortium name="The MGC Project Team"/>
        </authorList>
    </citation>
    <scope>NUCLEOTIDE SEQUENCE [LARGE SCALE MRNA]</scope>
    <source>
        <strain evidence="6">Czech II</strain>
        <strain evidence="7">FVB/N</strain>
        <tissue evidence="7">Mammary gland</tissue>
    </source>
</reference>
<reference evidence="5" key="4">
    <citation type="journal article" date="2004" name="Biochem. Biophys. Res. Commun.">
        <title>TIFAB inhibits TIFA, TRAF-interacting protein with a forkhead-associated domain.</title>
        <authorList>
            <person name="Matsumura T."/>
            <person name="Semba K."/>
            <person name="Azuma S."/>
            <person name="Ikawa S."/>
            <person name="Gohda J."/>
            <person name="Akiyama T."/>
            <person name="Inoue J."/>
        </authorList>
    </citation>
    <scope>FUNCTION</scope>
    <scope>TISSUE SPECIFICITY</scope>
</reference>
<keyword id="KW-0002">3D-structure</keyword>
<keyword id="KW-1185">Reference proteome</keyword>
<dbReference type="EMBL" id="AK036643">
    <property type="protein sequence ID" value="BAC29516.1"/>
    <property type="molecule type" value="mRNA"/>
</dbReference>
<dbReference type="EMBL" id="AK153654">
    <property type="protein sequence ID" value="BAE32135.1"/>
    <property type="molecule type" value="mRNA"/>
</dbReference>
<dbReference type="EMBL" id="AK170349">
    <property type="protein sequence ID" value="BAE41737.1"/>
    <property type="molecule type" value="mRNA"/>
</dbReference>
<dbReference type="EMBL" id="AK220206">
    <property type="protein sequence ID" value="BAD90131.1"/>
    <property type="status" value="ALT_INIT"/>
    <property type="molecule type" value="mRNA"/>
</dbReference>
<dbReference type="EMBL" id="BC005528">
    <property type="protein sequence ID" value="AAH05528.1"/>
    <property type="molecule type" value="mRNA"/>
</dbReference>
<dbReference type="EMBL" id="BC027057">
    <property type="protein sequence ID" value="AAH27057.1"/>
    <property type="molecule type" value="mRNA"/>
</dbReference>
<dbReference type="EMBL" id="BC031130">
    <property type="protein sequence ID" value="AAH31130.1"/>
    <property type="molecule type" value="mRNA"/>
</dbReference>
<dbReference type="CCDS" id="CCDS26558.1"/>
<dbReference type="RefSeq" id="NP_001162086.1">
    <property type="nucleotide sequence ID" value="NM_001168615.1"/>
</dbReference>
<dbReference type="RefSeq" id="NP_666088.1">
    <property type="nucleotide sequence ID" value="NM_145976.4"/>
</dbReference>
<dbReference type="RefSeq" id="XP_006517267.1">
    <property type="nucleotide sequence ID" value="XM_006517204.5"/>
</dbReference>
<dbReference type="RefSeq" id="XP_006517268.1">
    <property type="nucleotide sequence ID" value="XM_006517205.3"/>
</dbReference>
<dbReference type="PDB" id="8WWY">
    <property type="method" value="X-ray"/>
    <property type="resolution" value="1.79 A"/>
    <property type="chains" value="B/D=1-139"/>
</dbReference>
<dbReference type="PDBsum" id="8WWY"/>
<dbReference type="SMR" id="Q8JZM6"/>
<dbReference type="FunCoup" id="Q8JZM6">
    <property type="interactions" value="20"/>
</dbReference>
<dbReference type="STRING" id="10090.ENSMUSP00000131162"/>
<dbReference type="PaxDb" id="10090-ENSMUSP00000131162"/>
<dbReference type="ProteomicsDB" id="259445"/>
<dbReference type="Antibodypedia" id="53591">
    <property type="antibodies" value="57 antibodies from 12 providers"/>
</dbReference>
<dbReference type="DNASU" id="212937"/>
<dbReference type="Ensembl" id="ENSMUST00000169652.3">
    <property type="protein sequence ID" value="ENSMUSP00000131162.2"/>
    <property type="gene ID" value="ENSMUSG00000049625.7"/>
</dbReference>
<dbReference type="Ensembl" id="ENSMUST00000225063.2">
    <property type="protein sequence ID" value="ENSMUSP00000152976.2"/>
    <property type="gene ID" value="ENSMUSG00000049625.7"/>
</dbReference>
<dbReference type="GeneID" id="212937"/>
<dbReference type="KEGG" id="mmu:212937"/>
<dbReference type="UCSC" id="uc007qsj.2">
    <property type="organism name" value="mouse"/>
</dbReference>
<dbReference type="AGR" id="MGI:2385852"/>
<dbReference type="CTD" id="497189"/>
<dbReference type="MGI" id="MGI:2385852">
    <property type="gene designation" value="Tifab"/>
</dbReference>
<dbReference type="VEuPathDB" id="HostDB:ENSMUSG00000049625"/>
<dbReference type="eggNOG" id="ENOG502SPI3">
    <property type="taxonomic scope" value="Eukaryota"/>
</dbReference>
<dbReference type="GeneTree" id="ENSGT00940000154589"/>
<dbReference type="HOGENOM" id="CLU_116346_0_0_1"/>
<dbReference type="InParanoid" id="Q8JZM6"/>
<dbReference type="OMA" id="PLIYRPQ"/>
<dbReference type="OrthoDB" id="9835751at2759"/>
<dbReference type="PhylomeDB" id="Q8JZM6"/>
<dbReference type="TreeFam" id="TF333218"/>
<dbReference type="BioGRID-ORCS" id="212937">
    <property type="hits" value="1 hit in 76 CRISPR screens"/>
</dbReference>
<dbReference type="PRO" id="PR:Q8JZM6"/>
<dbReference type="Proteomes" id="UP000000589">
    <property type="component" value="Chromosome 13"/>
</dbReference>
<dbReference type="RNAct" id="Q8JZM6">
    <property type="molecule type" value="protein"/>
</dbReference>
<dbReference type="Bgee" id="ENSMUSG00000049625">
    <property type="expression patterns" value="Expressed in mesodermal cell in embryo and 80 other cell types or tissues"/>
</dbReference>
<dbReference type="GO" id="GO:0022625">
    <property type="term" value="C:cytosolic large ribosomal subunit"/>
    <property type="evidence" value="ECO:0007669"/>
    <property type="project" value="Ensembl"/>
</dbReference>
<dbReference type="GO" id="GO:0035800">
    <property type="term" value="F:deubiquitinase activator activity"/>
    <property type="evidence" value="ECO:0000315"/>
    <property type="project" value="MGI"/>
</dbReference>
<dbReference type="GO" id="GO:0043021">
    <property type="term" value="F:ribonucleoprotein complex binding"/>
    <property type="evidence" value="ECO:0007669"/>
    <property type="project" value="Ensembl"/>
</dbReference>
<dbReference type="GO" id="GO:0031223">
    <property type="term" value="P:auditory behavior"/>
    <property type="evidence" value="ECO:0007669"/>
    <property type="project" value="Ensembl"/>
</dbReference>
<dbReference type="GO" id="GO:0071320">
    <property type="term" value="P:cellular response to cAMP"/>
    <property type="evidence" value="ECO:0007669"/>
    <property type="project" value="Ensembl"/>
</dbReference>
<dbReference type="GO" id="GO:1904401">
    <property type="term" value="P:cellular response to Thyroid stimulating hormone"/>
    <property type="evidence" value="ECO:0007669"/>
    <property type="project" value="Ensembl"/>
</dbReference>
<dbReference type="GO" id="GO:0090103">
    <property type="term" value="P:cochlea morphogenesis"/>
    <property type="evidence" value="ECO:0007669"/>
    <property type="project" value="Ensembl"/>
</dbReference>
<dbReference type="GO" id="GO:0097094">
    <property type="term" value="P:craniofacial suture morphogenesis"/>
    <property type="evidence" value="ECO:0007669"/>
    <property type="project" value="Ensembl"/>
</dbReference>
<dbReference type="GO" id="GO:0035112">
    <property type="term" value="P:genitalia morphogenesis"/>
    <property type="evidence" value="ECO:0007669"/>
    <property type="project" value="Ensembl"/>
</dbReference>
<dbReference type="GO" id="GO:1905748">
    <property type="term" value="P:hard palate morphogenesis"/>
    <property type="evidence" value="ECO:0007669"/>
    <property type="project" value="Ensembl"/>
</dbReference>
<dbReference type="GO" id="GO:0002244">
    <property type="term" value="P:hematopoietic progenitor cell differentiation"/>
    <property type="evidence" value="ECO:0000315"/>
    <property type="project" value="MGI"/>
</dbReference>
<dbReference type="GO" id="GO:0098583">
    <property type="term" value="P:learned vocalization behavior"/>
    <property type="evidence" value="ECO:0007669"/>
    <property type="project" value="Ensembl"/>
</dbReference>
<dbReference type="GO" id="GO:0031663">
    <property type="term" value="P:lipopolysaccharide-mediated signaling pathway"/>
    <property type="evidence" value="ECO:0000315"/>
    <property type="project" value="MGI"/>
</dbReference>
<dbReference type="GO" id="GO:0071626">
    <property type="term" value="P:mastication"/>
    <property type="evidence" value="ECO:0007669"/>
    <property type="project" value="Ensembl"/>
</dbReference>
<dbReference type="GO" id="GO:0030099">
    <property type="term" value="P:myeloid cell differentiation"/>
    <property type="evidence" value="ECO:0000315"/>
    <property type="project" value="MGI"/>
</dbReference>
<dbReference type="GO" id="GO:1901078">
    <property type="term" value="P:negative regulation of relaxation of muscle"/>
    <property type="evidence" value="ECO:0007669"/>
    <property type="project" value="Ensembl"/>
</dbReference>
<dbReference type="GO" id="GO:1905747">
    <property type="term" value="P:negative regulation of saliva secretion"/>
    <property type="evidence" value="ECO:0007669"/>
    <property type="project" value="Ensembl"/>
</dbReference>
<dbReference type="GO" id="GO:0050885">
    <property type="term" value="P:neuromuscular process controlling balance"/>
    <property type="evidence" value="ECO:0007669"/>
    <property type="project" value="Ensembl"/>
</dbReference>
<dbReference type="GO" id="GO:0030432">
    <property type="term" value="P:peristalsis"/>
    <property type="evidence" value="ECO:0007669"/>
    <property type="project" value="Ensembl"/>
</dbReference>
<dbReference type="GO" id="GO:0043123">
    <property type="term" value="P:positive regulation of canonical NF-kappaB signal transduction"/>
    <property type="evidence" value="ECO:0007669"/>
    <property type="project" value="InterPro"/>
</dbReference>
<dbReference type="GO" id="GO:0045727">
    <property type="term" value="P:positive regulation of translation"/>
    <property type="evidence" value="ECO:0007669"/>
    <property type="project" value="Ensembl"/>
</dbReference>
<dbReference type="GO" id="GO:0010468">
    <property type="term" value="P:regulation of gene expression"/>
    <property type="evidence" value="ECO:0000316"/>
    <property type="project" value="MGI"/>
</dbReference>
<dbReference type="GO" id="GO:1902238">
    <property type="term" value="P:regulation of intrinsic apoptotic signaling pathway in response to osmotic stress by p53 class mediator"/>
    <property type="evidence" value="ECO:0000315"/>
    <property type="project" value="MGI"/>
</dbReference>
<dbReference type="GO" id="GO:0048634">
    <property type="term" value="P:regulation of muscle organ development"/>
    <property type="evidence" value="ECO:0007669"/>
    <property type="project" value="Ensembl"/>
</dbReference>
<dbReference type="GO" id="GO:0007356">
    <property type="term" value="P:thorax and anterior abdomen determination"/>
    <property type="evidence" value="ECO:0007669"/>
    <property type="project" value="Ensembl"/>
</dbReference>
<dbReference type="GO" id="GO:0002224">
    <property type="term" value="P:toll-like receptor signaling pathway"/>
    <property type="evidence" value="ECO:0000315"/>
    <property type="project" value="MGI"/>
</dbReference>
<dbReference type="GO" id="GO:0021559">
    <property type="term" value="P:trigeminal nerve development"/>
    <property type="evidence" value="ECO:0007669"/>
    <property type="project" value="Ensembl"/>
</dbReference>
<dbReference type="GO" id="GO:0021650">
    <property type="term" value="P:vestibulocochlear nerve formation"/>
    <property type="evidence" value="ECO:0007669"/>
    <property type="project" value="Ensembl"/>
</dbReference>
<dbReference type="Gene3D" id="2.60.200.20">
    <property type="match status" value="1"/>
</dbReference>
<dbReference type="InterPro" id="IPR000253">
    <property type="entry name" value="FHA_dom"/>
</dbReference>
<dbReference type="InterPro" id="IPR008984">
    <property type="entry name" value="SMAD_FHA_dom_sf"/>
</dbReference>
<dbReference type="InterPro" id="IPR033621">
    <property type="entry name" value="TIFA"/>
</dbReference>
<dbReference type="PANTHER" id="PTHR31266">
    <property type="entry name" value="TRAF-INTERACTING PROTEIN WITH FHA DOMAIN-CONTAINING PROTEIN A FAMILY MEMBER"/>
    <property type="match status" value="1"/>
</dbReference>
<dbReference type="PANTHER" id="PTHR31266:SF3">
    <property type="entry name" value="TRAF-INTERACTING PROTEIN WITH FHA DOMAIN-CONTAINING PROTEIN B"/>
    <property type="match status" value="1"/>
</dbReference>
<dbReference type="Pfam" id="PF00498">
    <property type="entry name" value="FHA"/>
    <property type="match status" value="1"/>
</dbReference>
<dbReference type="SUPFAM" id="SSF49879">
    <property type="entry name" value="SMAD/FHA domain"/>
    <property type="match status" value="1"/>
</dbReference>
<feature type="chain" id="PRO_0000320693" description="TRAF-interacting protein with FHA domain-containing protein B">
    <location>
        <begin position="1"/>
        <end position="147"/>
    </location>
</feature>
<feature type="domain" description="FHA" evidence="3">
    <location>
        <begin position="36"/>
        <end position="108"/>
    </location>
</feature>
<feature type="sequence conflict" description="In Ref. 3; AAH05528." evidence="5" ref="3">
    <original>P</original>
    <variation>S</variation>
    <location>
        <position position="19"/>
    </location>
</feature>
<feature type="sequence conflict" description="In Ref. 3; AAH05528." evidence="5" ref="3">
    <original>H</original>
    <variation>Q</variation>
    <location>
        <position position="24"/>
    </location>
</feature>
<feature type="sequence conflict" description="In Ref. 3; AAH05528." evidence="5" ref="3">
    <original>Q</original>
    <variation>P</variation>
    <location>
        <position position="27"/>
    </location>
</feature>
<comment type="function">
    <text evidence="4">Inhibits TIFA-mediated TRAF6 activation possibly by inducing a conformational change in TIFA.</text>
</comment>
<comment type="subunit">
    <text evidence="1">Interacts with TIFA.</text>
</comment>
<comment type="tissue specificity">
    <text evidence="4">Expressed at high levels in spleen and at moderate levels in lung, thymus, and small intestine.</text>
</comment>
<comment type="sequence caution" evidence="5">
    <conflict type="erroneous initiation">
        <sequence resource="EMBL-CDS" id="BAD90131"/>
    </conflict>
</comment>
<protein>
    <recommendedName>
        <fullName>TRAF-interacting protein with FHA domain-containing protein B</fullName>
    </recommendedName>
    <alternativeName>
        <fullName>TIFA-like protein</fullName>
    </alternativeName>
</protein>
<sequence length="147" mass="16636">MERPLTVLQVSLYHPTQGPVAFAHVPQQLQHDASRLLVGRGQNTHLQLQLPQLSRYHLSLEPYLEKGSSLLAFCLKVLTRKSCVWVNGLPLRYLEQVPLGTINRISFSGIQMLVRKEGGASLETFVCYFHLSPSPLIYRPKAQETDE</sequence>
<organism>
    <name type="scientific">Mus musculus</name>
    <name type="common">Mouse</name>
    <dbReference type="NCBI Taxonomy" id="10090"/>
    <lineage>
        <taxon>Eukaryota</taxon>
        <taxon>Metazoa</taxon>
        <taxon>Chordata</taxon>
        <taxon>Craniata</taxon>
        <taxon>Vertebrata</taxon>
        <taxon>Euteleostomi</taxon>
        <taxon>Mammalia</taxon>
        <taxon>Eutheria</taxon>
        <taxon>Euarchontoglires</taxon>
        <taxon>Glires</taxon>
        <taxon>Rodentia</taxon>
        <taxon>Myomorpha</taxon>
        <taxon>Muroidea</taxon>
        <taxon>Muridae</taxon>
        <taxon>Murinae</taxon>
        <taxon>Mus</taxon>
        <taxon>Mus</taxon>
    </lineage>
</organism>